<feature type="chain" id="PRO_0000324593" description="Peroxisomal testis-specific protein 1">
    <location>
        <begin position="1"/>
        <end position="134"/>
    </location>
</feature>
<feature type="short sequence motif" description="Microbody targeting signal" evidence="1">
    <location>
        <begin position="131"/>
        <end position="134"/>
    </location>
</feature>
<feature type="sequence conflict" description="In Ref. 3; AAH31105." evidence="2" ref="3">
    <original>V</original>
    <variation>A</variation>
    <location>
        <position position="98"/>
    </location>
</feature>
<feature type="helix" evidence="3">
    <location>
        <begin position="78"/>
        <end position="93"/>
    </location>
</feature>
<evidence type="ECO:0000250" key="1"/>
<evidence type="ECO:0000305" key="2"/>
<evidence type="ECO:0007829" key="3">
    <source>
        <dbReference type="PDB" id="7WJH"/>
    </source>
</evidence>
<reference key="1">
    <citation type="journal article" date="2003" name="Nature">
        <title>The DNA sequence and analysis of human chromosome 6.</title>
        <authorList>
            <person name="Mungall A.J."/>
            <person name="Palmer S.A."/>
            <person name="Sims S.K."/>
            <person name="Edwards C.A."/>
            <person name="Ashurst J.L."/>
            <person name="Wilming L."/>
            <person name="Jones M.C."/>
            <person name="Horton R."/>
            <person name="Hunt S.E."/>
            <person name="Scott C.E."/>
            <person name="Gilbert J.G.R."/>
            <person name="Clamp M.E."/>
            <person name="Bethel G."/>
            <person name="Milne S."/>
            <person name="Ainscough R."/>
            <person name="Almeida J.P."/>
            <person name="Ambrose K.D."/>
            <person name="Andrews T.D."/>
            <person name="Ashwell R.I.S."/>
            <person name="Babbage A.K."/>
            <person name="Bagguley C.L."/>
            <person name="Bailey J."/>
            <person name="Banerjee R."/>
            <person name="Barker D.J."/>
            <person name="Barlow K.F."/>
            <person name="Bates K."/>
            <person name="Beare D.M."/>
            <person name="Beasley H."/>
            <person name="Beasley O."/>
            <person name="Bird C.P."/>
            <person name="Blakey S.E."/>
            <person name="Bray-Allen S."/>
            <person name="Brook J."/>
            <person name="Brown A.J."/>
            <person name="Brown J.Y."/>
            <person name="Burford D.C."/>
            <person name="Burrill W."/>
            <person name="Burton J."/>
            <person name="Carder C."/>
            <person name="Carter N.P."/>
            <person name="Chapman J.C."/>
            <person name="Clark S.Y."/>
            <person name="Clark G."/>
            <person name="Clee C.M."/>
            <person name="Clegg S."/>
            <person name="Cobley V."/>
            <person name="Collier R.E."/>
            <person name="Collins J.E."/>
            <person name="Colman L.K."/>
            <person name="Corby N.R."/>
            <person name="Coville G.J."/>
            <person name="Culley K.M."/>
            <person name="Dhami P."/>
            <person name="Davies J."/>
            <person name="Dunn M."/>
            <person name="Earthrowl M.E."/>
            <person name="Ellington A.E."/>
            <person name="Evans K.A."/>
            <person name="Faulkner L."/>
            <person name="Francis M.D."/>
            <person name="Frankish A."/>
            <person name="Frankland J."/>
            <person name="French L."/>
            <person name="Garner P."/>
            <person name="Garnett J."/>
            <person name="Ghori M.J."/>
            <person name="Gilby L.M."/>
            <person name="Gillson C.J."/>
            <person name="Glithero R.J."/>
            <person name="Grafham D.V."/>
            <person name="Grant M."/>
            <person name="Gribble S."/>
            <person name="Griffiths C."/>
            <person name="Griffiths M.N.D."/>
            <person name="Hall R."/>
            <person name="Halls K.S."/>
            <person name="Hammond S."/>
            <person name="Harley J.L."/>
            <person name="Hart E.A."/>
            <person name="Heath P.D."/>
            <person name="Heathcott R."/>
            <person name="Holmes S.J."/>
            <person name="Howden P.J."/>
            <person name="Howe K.L."/>
            <person name="Howell G.R."/>
            <person name="Huckle E."/>
            <person name="Humphray S.J."/>
            <person name="Humphries M.D."/>
            <person name="Hunt A.R."/>
            <person name="Johnson C.M."/>
            <person name="Joy A.A."/>
            <person name="Kay M."/>
            <person name="Keenan S.J."/>
            <person name="Kimberley A.M."/>
            <person name="King A."/>
            <person name="Laird G.K."/>
            <person name="Langford C."/>
            <person name="Lawlor S."/>
            <person name="Leongamornlert D.A."/>
            <person name="Leversha M."/>
            <person name="Lloyd C.R."/>
            <person name="Lloyd D.M."/>
            <person name="Loveland J.E."/>
            <person name="Lovell J."/>
            <person name="Martin S."/>
            <person name="Mashreghi-Mohammadi M."/>
            <person name="Maslen G.L."/>
            <person name="Matthews L."/>
            <person name="McCann O.T."/>
            <person name="McLaren S.J."/>
            <person name="McLay K."/>
            <person name="McMurray A."/>
            <person name="Moore M.J.F."/>
            <person name="Mullikin J.C."/>
            <person name="Niblett D."/>
            <person name="Nickerson T."/>
            <person name="Novik K.L."/>
            <person name="Oliver K."/>
            <person name="Overton-Larty E.K."/>
            <person name="Parker A."/>
            <person name="Patel R."/>
            <person name="Pearce A.V."/>
            <person name="Peck A.I."/>
            <person name="Phillimore B.J.C.T."/>
            <person name="Phillips S."/>
            <person name="Plumb R.W."/>
            <person name="Porter K.M."/>
            <person name="Ramsey Y."/>
            <person name="Ranby S.A."/>
            <person name="Rice C.M."/>
            <person name="Ross M.T."/>
            <person name="Searle S.M."/>
            <person name="Sehra H.K."/>
            <person name="Sheridan E."/>
            <person name="Skuce C.D."/>
            <person name="Smith S."/>
            <person name="Smith M."/>
            <person name="Spraggon L."/>
            <person name="Squares S.L."/>
            <person name="Steward C.A."/>
            <person name="Sycamore N."/>
            <person name="Tamlyn-Hall G."/>
            <person name="Tester J."/>
            <person name="Theaker A.J."/>
            <person name="Thomas D.W."/>
            <person name="Thorpe A."/>
            <person name="Tracey A."/>
            <person name="Tromans A."/>
            <person name="Tubby B."/>
            <person name="Wall M."/>
            <person name="Wallis J.M."/>
            <person name="West A.P."/>
            <person name="White S.S."/>
            <person name="Whitehead S.L."/>
            <person name="Whittaker H."/>
            <person name="Wild A."/>
            <person name="Willey D.J."/>
            <person name="Wilmer T.E."/>
            <person name="Wood J.M."/>
            <person name="Wray P.W."/>
            <person name="Wyatt J.C."/>
            <person name="Young L."/>
            <person name="Younger R.M."/>
            <person name="Bentley D.R."/>
            <person name="Coulson A."/>
            <person name="Durbin R.M."/>
            <person name="Hubbard T."/>
            <person name="Sulston J.E."/>
            <person name="Dunham I."/>
            <person name="Rogers J."/>
            <person name="Beck S."/>
        </authorList>
    </citation>
    <scope>NUCLEOTIDE SEQUENCE [LARGE SCALE GENOMIC DNA]</scope>
</reference>
<reference key="2">
    <citation type="submission" date="2005-07" db="EMBL/GenBank/DDBJ databases">
        <authorList>
            <person name="Mural R.J."/>
            <person name="Istrail S."/>
            <person name="Sutton G.G."/>
            <person name="Florea L."/>
            <person name="Halpern A.L."/>
            <person name="Mobarry C.M."/>
            <person name="Lippert R."/>
            <person name="Walenz B."/>
            <person name="Shatkay H."/>
            <person name="Dew I."/>
            <person name="Miller J.R."/>
            <person name="Flanigan M.J."/>
            <person name="Edwards N.J."/>
            <person name="Bolanos R."/>
            <person name="Fasulo D."/>
            <person name="Halldorsson B.V."/>
            <person name="Hannenhalli S."/>
            <person name="Turner R."/>
            <person name="Yooseph S."/>
            <person name="Lu F."/>
            <person name="Nusskern D.R."/>
            <person name="Shue B.C."/>
            <person name="Zheng X.H."/>
            <person name="Zhong F."/>
            <person name="Delcher A.L."/>
            <person name="Huson D.H."/>
            <person name="Kravitz S.A."/>
            <person name="Mouchard L."/>
            <person name="Reinert K."/>
            <person name="Remington K.A."/>
            <person name="Clark A.G."/>
            <person name="Waterman M.S."/>
            <person name="Eichler E.E."/>
            <person name="Adams M.D."/>
            <person name="Hunkapiller M.W."/>
            <person name="Myers E.W."/>
            <person name="Venter J.C."/>
        </authorList>
    </citation>
    <scope>NUCLEOTIDE SEQUENCE [LARGE SCALE GENOMIC DNA]</scope>
</reference>
<reference key="3">
    <citation type="journal article" date="2004" name="Genome Res.">
        <title>The status, quality, and expansion of the NIH full-length cDNA project: the Mammalian Gene Collection (MGC).</title>
        <authorList>
            <consortium name="The MGC Project Team"/>
        </authorList>
    </citation>
    <scope>NUCLEOTIDE SEQUENCE [LARGE SCALE MRNA]</scope>
    <source>
        <tissue>Testis</tissue>
    </source>
</reference>
<reference key="4">
    <citation type="journal article" date="2007" name="Cytogenet. Genome Res.">
        <title>The putative peroxisomal gene Pxt1 is exclusively expressed in the testis.</title>
        <authorList>
            <person name="Grzmil P."/>
            <person name="Burfeind C."/>
            <person name="Preuss T."/>
            <person name="Dixkens C."/>
            <person name="Wolf S."/>
            <person name="Engel W."/>
            <person name="Burfeind P."/>
        </authorList>
    </citation>
    <scope>NUCLEOTIDE SEQUENCE [MRNA] OF 77-134</scope>
    <source>
        <tissue>Testis</tissue>
    </source>
</reference>
<gene>
    <name type="primary">PXT1</name>
    <name type="synonym">STEPP</name>
</gene>
<keyword id="KW-0002">3D-structure</keyword>
<keyword id="KW-0576">Peroxisome</keyword>
<keyword id="KW-1185">Reference proteome</keyword>
<protein>
    <recommendedName>
        <fullName>Peroxisomal testis-specific protein 1</fullName>
    </recommendedName>
    <alternativeName>
        <fullName>Small testis-specific peroxisomal protein</fullName>
    </alternativeName>
</protein>
<organism>
    <name type="scientific">Homo sapiens</name>
    <name type="common">Human</name>
    <dbReference type="NCBI Taxonomy" id="9606"/>
    <lineage>
        <taxon>Eukaryota</taxon>
        <taxon>Metazoa</taxon>
        <taxon>Chordata</taxon>
        <taxon>Craniata</taxon>
        <taxon>Vertebrata</taxon>
        <taxon>Euteleostomi</taxon>
        <taxon>Mammalia</taxon>
        <taxon>Eutheria</taxon>
        <taxon>Euarchontoglires</taxon>
        <taxon>Primates</taxon>
        <taxon>Haplorrhini</taxon>
        <taxon>Catarrhini</taxon>
        <taxon>Hominidae</taxon>
        <taxon>Homo</taxon>
    </lineage>
</organism>
<sequence>MKKKHDGIVYETKEVLNPSPKVTHCCKSLWLKYSFQKAYMTQLVSSQPVPAMSRNPDHNLLSQPKEHSIVQKHHQEEIIHKLAMQLRHIGDNIDHRMVREDLQQDGRDALDHFVFFFFRRVQVLLHFFWNNHLL</sequence>
<accession>Q8NFP0</accession>
<accession>J3KR74</accession>
<name>PXT1_HUMAN</name>
<comment type="interaction">
    <interactant intactId="EBI-12017894">
        <id>Q8NFP0</id>
    </interactant>
    <interactant intactId="EBI-16439278">
        <id>Q6FHY5</id>
        <label>MEOX2</label>
    </interactant>
    <organismsDiffer>false</organismsDiffer>
    <experiments>3</experiments>
</comment>
<comment type="subcellular location">
    <subcellularLocation>
        <location evidence="1">Peroxisome</location>
    </subcellularLocation>
</comment>
<comment type="caution">
    <text evidence="2">It is uncertain whether Met-1 or Met-40 is the initiator.</text>
</comment>
<comment type="sequence caution" evidence="2">
    <conflict type="erroneous initiation">
        <sequence resource="EMBL-CDS" id="AAH31105"/>
    </conflict>
    <text>Truncated N-terminus.</text>
</comment>
<comment type="sequence caution" evidence="2">
    <conflict type="erroneous initiation">
        <sequence resource="EMBL-CDS" id="AAI07050"/>
    </conflict>
    <text>Truncated N-terminus.</text>
</comment>
<comment type="sequence caution" evidence="2">
    <conflict type="erroneous initiation">
        <sequence resource="EMBL-CDS" id="AAN03789"/>
    </conflict>
    <text>Truncated N-terminus.</text>
</comment>
<proteinExistence type="evidence at protein level"/>
<dbReference type="EMBL" id="AL133263">
    <property type="status" value="NOT_ANNOTATED_CDS"/>
    <property type="molecule type" value="Genomic_DNA"/>
</dbReference>
<dbReference type="EMBL" id="AL136135">
    <property type="status" value="NOT_ANNOTATED_CDS"/>
    <property type="molecule type" value="Genomic_DNA"/>
</dbReference>
<dbReference type="EMBL" id="Z84484">
    <property type="status" value="NOT_ANNOTATED_CDS"/>
    <property type="molecule type" value="Genomic_DNA"/>
</dbReference>
<dbReference type="EMBL" id="CH471081">
    <property type="protein sequence ID" value="EAX03891.1"/>
    <property type="molecule type" value="Genomic_DNA"/>
</dbReference>
<dbReference type="EMBL" id="BC031105">
    <property type="protein sequence ID" value="AAH31105.1"/>
    <property type="status" value="ALT_INIT"/>
    <property type="molecule type" value="mRNA"/>
</dbReference>
<dbReference type="EMBL" id="BC107049">
    <property type="protein sequence ID" value="AAI07050.1"/>
    <property type="status" value="ALT_INIT"/>
    <property type="molecule type" value="mRNA"/>
</dbReference>
<dbReference type="EMBL" id="AF486827">
    <property type="protein sequence ID" value="AAN03789.1"/>
    <property type="status" value="ALT_INIT"/>
    <property type="molecule type" value="mRNA"/>
</dbReference>
<dbReference type="CCDS" id="CCDS4820.2"/>
<dbReference type="RefSeq" id="NP_694535.2">
    <property type="nucleotide sequence ID" value="NM_152990.4"/>
</dbReference>
<dbReference type="PDB" id="7WJH">
    <property type="method" value="X-ray"/>
    <property type="resolution" value="1.70 A"/>
    <property type="chains" value="B=76-101"/>
</dbReference>
<dbReference type="PDB" id="8GSV">
    <property type="method" value="X-ray"/>
    <property type="resolution" value="2.20 A"/>
    <property type="chains" value="B/D/F/H/J/L/N/P/R/T/V/X=76-101"/>
</dbReference>
<dbReference type="PDBsum" id="7WJH"/>
<dbReference type="PDBsum" id="8GSV"/>
<dbReference type="SMR" id="Q8NFP0"/>
<dbReference type="BioGRID" id="128810">
    <property type="interactions" value="1"/>
</dbReference>
<dbReference type="FunCoup" id="Q8NFP0">
    <property type="interactions" value="370"/>
</dbReference>
<dbReference type="IntAct" id="Q8NFP0">
    <property type="interactions" value="1"/>
</dbReference>
<dbReference type="STRING" id="9606.ENSP00000419944"/>
<dbReference type="GlyGen" id="Q8NFP0">
    <property type="glycosylation" value="1 site, 1 O-linked glycan (1 site)"/>
</dbReference>
<dbReference type="iPTMnet" id="Q8NFP0"/>
<dbReference type="PhosphoSitePlus" id="Q8NFP0"/>
<dbReference type="BioMuta" id="PXT1"/>
<dbReference type="PaxDb" id="9606-ENSP00000419944"/>
<dbReference type="Antibodypedia" id="29675">
    <property type="antibodies" value="26 antibodies from 12 providers"/>
</dbReference>
<dbReference type="DNASU" id="222659"/>
<dbReference type="Ensembl" id="ENST00000454782.3">
    <property type="protein sequence ID" value="ENSP00000419944.1"/>
    <property type="gene ID" value="ENSG00000179165.12"/>
</dbReference>
<dbReference type="GeneID" id="222659"/>
<dbReference type="KEGG" id="hsa:222659"/>
<dbReference type="MANE-Select" id="ENST00000454782.3">
    <property type="protein sequence ID" value="ENSP00000419944.1"/>
    <property type="RefSeq nucleotide sequence ID" value="NM_152990.4"/>
    <property type="RefSeq protein sequence ID" value="NP_694535.2"/>
</dbReference>
<dbReference type="UCSC" id="uc003omd.3">
    <property type="organism name" value="human"/>
</dbReference>
<dbReference type="AGR" id="HGNC:18312"/>
<dbReference type="CTD" id="222659"/>
<dbReference type="DisGeNET" id="222659"/>
<dbReference type="GeneCards" id="PXT1"/>
<dbReference type="HGNC" id="HGNC:18312">
    <property type="gene designation" value="PXT1"/>
</dbReference>
<dbReference type="HPA" id="ENSG00000179165">
    <property type="expression patterns" value="Tissue enriched (testis)"/>
</dbReference>
<dbReference type="neXtProt" id="NX_Q8NFP0"/>
<dbReference type="OpenTargets" id="ENSG00000179165"/>
<dbReference type="PharmGKB" id="PA134958920"/>
<dbReference type="VEuPathDB" id="HostDB:ENSG00000179165"/>
<dbReference type="eggNOG" id="ENOG502RU1V">
    <property type="taxonomic scope" value="Eukaryota"/>
</dbReference>
<dbReference type="GeneTree" id="ENSGT00390000012893"/>
<dbReference type="HOGENOM" id="CLU_1911536_0_0_1"/>
<dbReference type="InParanoid" id="Q8NFP0"/>
<dbReference type="OMA" id="TIVCEPK"/>
<dbReference type="OrthoDB" id="9834429at2759"/>
<dbReference type="PAN-GO" id="Q8NFP0">
    <property type="GO annotations" value="3 GO annotations based on evolutionary models"/>
</dbReference>
<dbReference type="PhylomeDB" id="Q8NFP0"/>
<dbReference type="TreeFam" id="TF338547"/>
<dbReference type="PathwayCommons" id="Q8NFP0"/>
<dbReference type="SignaLink" id="Q8NFP0"/>
<dbReference type="BioGRID-ORCS" id="222659">
    <property type="hits" value="10 hits in 1134 CRISPR screens"/>
</dbReference>
<dbReference type="GenomeRNAi" id="222659"/>
<dbReference type="Pharos" id="Q8NFP0">
    <property type="development level" value="Tdark"/>
</dbReference>
<dbReference type="PRO" id="PR:Q8NFP0"/>
<dbReference type="Proteomes" id="UP000005640">
    <property type="component" value="Chromosome 6"/>
</dbReference>
<dbReference type="RNAct" id="Q8NFP0">
    <property type="molecule type" value="protein"/>
</dbReference>
<dbReference type="Bgee" id="ENSG00000179165">
    <property type="expression patterns" value="Expressed in male germ line stem cell (sensu Vertebrata) in testis and 65 other cell types or tissues"/>
</dbReference>
<dbReference type="ExpressionAtlas" id="Q8NFP0">
    <property type="expression patterns" value="baseline and differential"/>
</dbReference>
<dbReference type="GO" id="GO:0005777">
    <property type="term" value="C:peroxisome"/>
    <property type="evidence" value="ECO:0000250"/>
    <property type="project" value="UniProtKB"/>
</dbReference>
<dbReference type="InterPro" id="IPR029186">
    <property type="entry name" value="PXT1"/>
</dbReference>
<dbReference type="PANTHER" id="PTHR40381">
    <property type="entry name" value="PEROXISOMAL TESTIS-SPECIFIC PROTEIN 1"/>
    <property type="match status" value="1"/>
</dbReference>
<dbReference type="PANTHER" id="PTHR40381:SF1">
    <property type="entry name" value="PEROXISOMAL TESTIS-SPECIFIC PROTEIN 1"/>
    <property type="match status" value="1"/>
</dbReference>
<dbReference type="Pfam" id="PF15214">
    <property type="entry name" value="PXT1"/>
    <property type="match status" value="1"/>
</dbReference>